<gene>
    <name type="primary">Lin28b</name>
</gene>
<sequence length="247" mass="26903">MAEGGASKGEEPEKLPGLAEDEPQVLHGTGHCKWFNVRMGFGFISMISREGNPLDIPVDVFVHQSKLFMEGFRSLKEGEPVEFTFKKSPKGLESIRVTGPGGSPCLGSERRPKGKTLQKRKPKGDRCYNCGGLDHHAKECSLPPQPKKCHYCQSIMHMVANCPHKLAAQLPASSQGRQEAESQPCSSAAPREVGGGHGCTVLFPQEVKSEMAEHSDRSPQEVSSTKAFAAIGEQNKKGPLIQKRKKT</sequence>
<evidence type="ECO:0000250" key="1"/>
<evidence type="ECO:0000250" key="2">
    <source>
        <dbReference type="UniProtKB" id="Q6ZN17"/>
    </source>
</evidence>
<evidence type="ECO:0000255" key="3">
    <source>
        <dbReference type="PROSITE-ProRule" id="PRU00047"/>
    </source>
</evidence>
<evidence type="ECO:0000256" key="4">
    <source>
        <dbReference type="SAM" id="MobiDB-lite"/>
    </source>
</evidence>
<evidence type="ECO:0000269" key="5">
    <source>
    </source>
</evidence>
<evidence type="ECO:0000303" key="6">
    <source>
    </source>
</evidence>
<evidence type="ECO:0000303" key="7">
    <source>
    </source>
</evidence>
<evidence type="ECO:0000303" key="8">
    <source ref="1"/>
</evidence>
<evidence type="ECO:0000305" key="9"/>
<feature type="chain" id="PRO_0000253794" description="Protein lin-28 homolog B">
    <location>
        <begin position="1"/>
        <end position="247"/>
    </location>
</feature>
<feature type="domain" description="CSD">
    <location>
        <begin position="27"/>
        <end position="100"/>
    </location>
</feature>
<feature type="zinc finger region" description="CCHC-type 1" evidence="3">
    <location>
        <begin position="125"/>
        <end position="142"/>
    </location>
</feature>
<feature type="zinc finger region" description="CCHC-type 2" evidence="3">
    <location>
        <begin position="147"/>
        <end position="164"/>
    </location>
</feature>
<feature type="region of interest" description="Disordered" evidence="4">
    <location>
        <begin position="1"/>
        <end position="22"/>
    </location>
</feature>
<feature type="region of interest" description="Disordered" evidence="4">
    <location>
        <begin position="96"/>
        <end position="124"/>
    </location>
</feature>
<feature type="region of interest" description="Disordered" evidence="4">
    <location>
        <begin position="173"/>
        <end position="247"/>
    </location>
</feature>
<feature type="compositionally biased region" description="Basic residues" evidence="4">
    <location>
        <begin position="112"/>
        <end position="123"/>
    </location>
</feature>
<feature type="compositionally biased region" description="Polar residues" evidence="4">
    <location>
        <begin position="173"/>
        <end position="186"/>
    </location>
</feature>
<feature type="compositionally biased region" description="Basic and acidic residues" evidence="4">
    <location>
        <begin position="207"/>
        <end position="219"/>
    </location>
</feature>
<feature type="binding site" evidence="1">
    <location>
        <position position="127"/>
    </location>
    <ligand>
        <name>Zn(2+)</name>
        <dbReference type="ChEBI" id="CHEBI:29105"/>
        <label>1</label>
    </ligand>
</feature>
<feature type="binding site" evidence="1">
    <location>
        <position position="130"/>
    </location>
    <ligand>
        <name>Zn(2+)</name>
        <dbReference type="ChEBI" id="CHEBI:29105"/>
        <label>1</label>
    </ligand>
</feature>
<feature type="binding site" evidence="1">
    <location>
        <position position="135"/>
    </location>
    <ligand>
        <name>Zn(2+)</name>
        <dbReference type="ChEBI" id="CHEBI:29105"/>
        <label>1</label>
    </ligand>
</feature>
<feature type="binding site" evidence="1">
    <location>
        <position position="140"/>
    </location>
    <ligand>
        <name>Zn(2+)</name>
        <dbReference type="ChEBI" id="CHEBI:29105"/>
        <label>1</label>
    </ligand>
</feature>
<feature type="binding site" evidence="1">
    <location>
        <position position="149"/>
    </location>
    <ligand>
        <name>Zn(2+)</name>
        <dbReference type="ChEBI" id="CHEBI:29105"/>
        <label>2</label>
    </ligand>
</feature>
<feature type="binding site" evidence="1">
    <location>
        <position position="152"/>
    </location>
    <ligand>
        <name>Zn(2+)</name>
        <dbReference type="ChEBI" id="CHEBI:29105"/>
        <label>2</label>
    </ligand>
</feature>
<feature type="binding site" evidence="1">
    <location>
        <position position="157"/>
    </location>
    <ligand>
        <name>Zn(2+)</name>
        <dbReference type="ChEBI" id="CHEBI:29105"/>
        <label>2</label>
    </ligand>
</feature>
<feature type="binding site" evidence="1">
    <location>
        <position position="162"/>
    </location>
    <ligand>
        <name>Zn(2+)</name>
        <dbReference type="ChEBI" id="CHEBI:29105"/>
        <label>2</label>
    </ligand>
</feature>
<feature type="modified residue" description="Phosphoserine" evidence="2">
    <location>
        <position position="94"/>
    </location>
</feature>
<feature type="modified residue" description="Phosphoserine" evidence="2">
    <location>
        <position position="103"/>
    </location>
</feature>
<feature type="modified residue" description="Phosphoserine" evidence="2">
    <location>
        <position position="108"/>
    </location>
</feature>
<feature type="splice variant" id="VSP_021115" description="In isoform 3." evidence="7">
    <location>
        <begin position="1"/>
        <end position="38"/>
    </location>
</feature>
<feature type="splice variant" id="VSP_021116" description="In isoform 4." evidence="7">
    <original>MAE</original>
    <variation>MHLVPLLANILNVLQKMMRSFNQGSSAP</variation>
    <location>
        <begin position="1"/>
        <end position="3"/>
    </location>
</feature>
<feature type="splice variant" id="VSP_021117" description="In isoform 4." evidence="7">
    <original>SKLFMEG</original>
    <variation>LFPPSHH</variation>
    <location>
        <begin position="65"/>
        <end position="71"/>
    </location>
</feature>
<feature type="splice variant" id="VSP_021118" description="In isoform 4." evidence="7">
    <location>
        <begin position="72"/>
        <end position="247"/>
    </location>
</feature>
<feature type="splice variant" id="VSP_021119" description="In isoform 2 and isoform 3." evidence="6 7 8">
    <original>D</original>
    <variation>DRWRRQDLLMDQMWTVREEESRMIP</variation>
    <location>
        <position position="125"/>
    </location>
</feature>
<feature type="splice variant" id="VSP_021120" description="In isoform 3." evidence="7">
    <original>CYNCGGLDHHAKECSLPPQPKKCHYC</original>
    <variation>FVWLGQQERRRDRFPRWGKLQDGLGV</variation>
    <location>
        <begin position="127"/>
        <end position="152"/>
    </location>
</feature>
<feature type="splice variant" id="VSP_021121" description="In isoform 3." evidence="7">
    <location>
        <begin position="153"/>
        <end position="247"/>
    </location>
</feature>
<protein>
    <recommendedName>
        <fullName>Protein lin-28 homolog B</fullName>
        <shortName>Lin-28B</shortName>
    </recommendedName>
</protein>
<dbReference type="EMBL" id="DQ127225">
    <property type="protein sequence ID" value="AAZ38894.1"/>
    <property type="molecule type" value="mRNA"/>
</dbReference>
<dbReference type="EMBL" id="AK133928">
    <property type="protein sequence ID" value="BAE21931.1"/>
    <property type="molecule type" value="mRNA"/>
</dbReference>
<dbReference type="EMBL" id="AK012973">
    <property type="protein sequence ID" value="BAE43235.1"/>
    <property type="molecule type" value="mRNA"/>
</dbReference>
<dbReference type="EMBL" id="AC153847">
    <property type="status" value="NOT_ANNOTATED_CDS"/>
    <property type="molecule type" value="Genomic_DNA"/>
</dbReference>
<dbReference type="EMBL" id="AC155715">
    <property type="status" value="NOT_ANNOTATED_CDS"/>
    <property type="molecule type" value="Genomic_DNA"/>
</dbReference>
<dbReference type="EMBL" id="BC089037">
    <property type="protein sequence ID" value="AAH89037.1"/>
    <property type="molecule type" value="mRNA"/>
</dbReference>
<dbReference type="CCDS" id="CCDS35895.1">
    <molecule id="Q45KJ6-2"/>
</dbReference>
<dbReference type="RefSeq" id="NP_001026942.1">
    <molecule id="Q45KJ6-2"/>
    <property type="nucleotide sequence ID" value="NM_001031772.2"/>
</dbReference>
<dbReference type="RefSeq" id="XP_011241490.1">
    <molecule id="Q45KJ6-2"/>
    <property type="nucleotide sequence ID" value="XM_011243188.1"/>
</dbReference>
<dbReference type="SMR" id="Q45KJ6"/>
<dbReference type="DIP" id="DIP-48572N"/>
<dbReference type="FunCoup" id="Q45KJ6">
    <property type="interactions" value="1335"/>
</dbReference>
<dbReference type="IntAct" id="Q45KJ6">
    <property type="interactions" value="1"/>
</dbReference>
<dbReference type="STRING" id="10090.ENSMUSP00000078361"/>
<dbReference type="iPTMnet" id="Q45KJ6"/>
<dbReference type="PhosphoSitePlus" id="Q45KJ6"/>
<dbReference type="PaxDb" id="10090-ENSMUSP00000078361"/>
<dbReference type="PeptideAtlas" id="Q45KJ6"/>
<dbReference type="ProteomicsDB" id="292346">
    <molecule id="Q45KJ6-1"/>
</dbReference>
<dbReference type="ProteomicsDB" id="292347">
    <molecule id="Q45KJ6-2"/>
</dbReference>
<dbReference type="ProteomicsDB" id="292348">
    <molecule id="Q45KJ6-3"/>
</dbReference>
<dbReference type="ProteomicsDB" id="292349">
    <molecule id="Q45KJ6-4"/>
</dbReference>
<dbReference type="Antibodypedia" id="32105">
    <property type="antibodies" value="310 antibodies from 36 providers"/>
</dbReference>
<dbReference type="DNASU" id="380669"/>
<dbReference type="Ensembl" id="ENSMUST00000079390.7">
    <molecule id="Q45KJ6-2"/>
    <property type="protein sequence ID" value="ENSMUSP00000078361.7"/>
    <property type="gene ID" value="ENSMUSG00000063804.9"/>
</dbReference>
<dbReference type="GeneID" id="380669"/>
<dbReference type="KEGG" id="mmu:380669"/>
<dbReference type="UCSC" id="uc007faa.2">
    <molecule id="Q45KJ6-2"/>
    <property type="organism name" value="mouse"/>
</dbReference>
<dbReference type="UCSC" id="uc007fab.1">
    <molecule id="Q45KJ6-3"/>
    <property type="organism name" value="mouse"/>
</dbReference>
<dbReference type="AGR" id="MGI:3584032"/>
<dbReference type="CTD" id="389421"/>
<dbReference type="MGI" id="MGI:3584032">
    <property type="gene designation" value="Lin28b"/>
</dbReference>
<dbReference type="VEuPathDB" id="HostDB:ENSMUSG00000063804"/>
<dbReference type="eggNOG" id="KOG3070">
    <property type="taxonomic scope" value="Eukaryota"/>
</dbReference>
<dbReference type="GeneTree" id="ENSGT00940000153295"/>
<dbReference type="HOGENOM" id="CLU_089169_1_1_1"/>
<dbReference type="InParanoid" id="Q45KJ6"/>
<dbReference type="OMA" id="EESRMIP"/>
<dbReference type="PhylomeDB" id="Q45KJ6"/>
<dbReference type="TreeFam" id="TF316240"/>
<dbReference type="BioGRID-ORCS" id="380669">
    <property type="hits" value="2 hits in 78 CRISPR screens"/>
</dbReference>
<dbReference type="ChiTaRS" id="Lin28b">
    <property type="organism name" value="mouse"/>
</dbReference>
<dbReference type="PRO" id="PR:Q45KJ6"/>
<dbReference type="Proteomes" id="UP000000589">
    <property type="component" value="Chromosome 10"/>
</dbReference>
<dbReference type="RNAct" id="Q45KJ6">
    <property type="molecule type" value="protein"/>
</dbReference>
<dbReference type="Bgee" id="ENSMUSG00000063804">
    <property type="expression patterns" value="Expressed in embryonic post-anal tail and 61 other cell types or tissues"/>
</dbReference>
<dbReference type="GO" id="GO:0005829">
    <property type="term" value="C:cytosol"/>
    <property type="evidence" value="ECO:0007669"/>
    <property type="project" value="Ensembl"/>
</dbReference>
<dbReference type="GO" id="GO:0005730">
    <property type="term" value="C:nucleolus"/>
    <property type="evidence" value="ECO:0007669"/>
    <property type="project" value="UniProtKB-SubCell"/>
</dbReference>
<dbReference type="GO" id="GO:0005654">
    <property type="term" value="C:nucleoplasm"/>
    <property type="evidence" value="ECO:0007669"/>
    <property type="project" value="Ensembl"/>
</dbReference>
<dbReference type="GO" id="GO:0003723">
    <property type="term" value="F:RNA binding"/>
    <property type="evidence" value="ECO:0000250"/>
    <property type="project" value="UniProtKB"/>
</dbReference>
<dbReference type="GO" id="GO:1990837">
    <property type="term" value="F:sequence-specific double-stranded DNA binding"/>
    <property type="evidence" value="ECO:0007669"/>
    <property type="project" value="Ensembl"/>
</dbReference>
<dbReference type="GO" id="GO:0008270">
    <property type="term" value="F:zinc ion binding"/>
    <property type="evidence" value="ECO:0007669"/>
    <property type="project" value="UniProtKB-KW"/>
</dbReference>
<dbReference type="GO" id="GO:0010587">
    <property type="term" value="P:miRNA catabolic process"/>
    <property type="evidence" value="ECO:0000250"/>
    <property type="project" value="UniProtKB"/>
</dbReference>
<dbReference type="GO" id="GO:2000632">
    <property type="term" value="P:negative regulation of pre-miRNA processing"/>
    <property type="evidence" value="ECO:0007669"/>
    <property type="project" value="Ensembl"/>
</dbReference>
<dbReference type="GO" id="GO:2000635">
    <property type="term" value="P:negative regulation of primary miRNA processing"/>
    <property type="evidence" value="ECO:0007669"/>
    <property type="project" value="Ensembl"/>
</dbReference>
<dbReference type="GO" id="GO:2000627">
    <property type="term" value="P:positive regulation of miRNA catabolic process"/>
    <property type="evidence" value="ECO:0007669"/>
    <property type="project" value="Ensembl"/>
</dbReference>
<dbReference type="GO" id="GO:0031054">
    <property type="term" value="P:pre-miRNA processing"/>
    <property type="evidence" value="ECO:0000250"/>
    <property type="project" value="UniProtKB"/>
</dbReference>
<dbReference type="GO" id="GO:0031123">
    <property type="term" value="P:RNA 3'-end processing"/>
    <property type="evidence" value="ECO:0000250"/>
    <property type="project" value="UniProtKB"/>
</dbReference>
<dbReference type="GO" id="GO:0050779">
    <property type="term" value="P:RNA destabilization"/>
    <property type="evidence" value="ECO:0007669"/>
    <property type="project" value="Ensembl"/>
</dbReference>
<dbReference type="CDD" id="cd04458">
    <property type="entry name" value="CSP_CDS"/>
    <property type="match status" value="1"/>
</dbReference>
<dbReference type="FunFam" id="4.10.60.10:FF:000007">
    <property type="entry name" value="Protein lin-28 homolog A"/>
    <property type="match status" value="1"/>
</dbReference>
<dbReference type="FunFam" id="2.40.50.140:FF:000087">
    <property type="entry name" value="Protein lin-28 homolog B"/>
    <property type="match status" value="1"/>
</dbReference>
<dbReference type="Gene3D" id="2.40.50.140">
    <property type="entry name" value="Nucleic acid-binding proteins"/>
    <property type="match status" value="1"/>
</dbReference>
<dbReference type="Gene3D" id="4.10.60.10">
    <property type="entry name" value="Zinc finger, CCHC-type"/>
    <property type="match status" value="1"/>
</dbReference>
<dbReference type="InterPro" id="IPR011129">
    <property type="entry name" value="CSD"/>
</dbReference>
<dbReference type="InterPro" id="IPR002059">
    <property type="entry name" value="CSP_DNA-bd"/>
</dbReference>
<dbReference type="InterPro" id="IPR051373">
    <property type="entry name" value="Lin-28_RNA-binding"/>
</dbReference>
<dbReference type="InterPro" id="IPR054081">
    <property type="entry name" value="Lin-28A-like_Znf-CCHC_2"/>
</dbReference>
<dbReference type="InterPro" id="IPR012340">
    <property type="entry name" value="NA-bd_OB-fold"/>
</dbReference>
<dbReference type="InterPro" id="IPR001878">
    <property type="entry name" value="Znf_CCHC"/>
</dbReference>
<dbReference type="InterPro" id="IPR036875">
    <property type="entry name" value="Znf_CCHC_sf"/>
</dbReference>
<dbReference type="PANTHER" id="PTHR46109">
    <property type="entry name" value="PROTEIN LIN-28"/>
    <property type="match status" value="1"/>
</dbReference>
<dbReference type="PANTHER" id="PTHR46109:SF3">
    <property type="entry name" value="PROTEIN LIN-28 HOMOLOG B"/>
    <property type="match status" value="1"/>
</dbReference>
<dbReference type="Pfam" id="PF00313">
    <property type="entry name" value="CSD"/>
    <property type="match status" value="1"/>
</dbReference>
<dbReference type="Pfam" id="PF21890">
    <property type="entry name" value="Lin-28A-like_zf-CCHC_2"/>
    <property type="match status" value="1"/>
</dbReference>
<dbReference type="Pfam" id="PF00098">
    <property type="entry name" value="zf-CCHC"/>
    <property type="match status" value="1"/>
</dbReference>
<dbReference type="PRINTS" id="PR00050">
    <property type="entry name" value="COLDSHOCK"/>
</dbReference>
<dbReference type="SMART" id="SM00357">
    <property type="entry name" value="CSP"/>
    <property type="match status" value="1"/>
</dbReference>
<dbReference type="SMART" id="SM00343">
    <property type="entry name" value="ZnF_C2HC"/>
    <property type="match status" value="2"/>
</dbReference>
<dbReference type="SUPFAM" id="SSF50249">
    <property type="entry name" value="Nucleic acid-binding proteins"/>
    <property type="match status" value="1"/>
</dbReference>
<dbReference type="SUPFAM" id="SSF57756">
    <property type="entry name" value="Retrovirus zinc finger-like domains"/>
    <property type="match status" value="1"/>
</dbReference>
<dbReference type="PROSITE" id="PS51857">
    <property type="entry name" value="CSD_2"/>
    <property type="match status" value="1"/>
</dbReference>
<dbReference type="PROSITE" id="PS50158">
    <property type="entry name" value="ZF_CCHC"/>
    <property type="match status" value="1"/>
</dbReference>
<proteinExistence type="evidence at protein level"/>
<accession>Q45KJ6</accession>
<accession>Q3UZC6</accession>
<accession>Q3V444</accession>
<reference key="1">
    <citation type="submission" date="2005-07" db="EMBL/GenBank/DDBJ databases">
        <title>Expression of Lin28A and Lin28B in post-implantation mouse embryos.</title>
        <authorList>
            <person name="Moss E.G."/>
            <person name="Kemper K."/>
        </authorList>
    </citation>
    <scope>NUCLEOTIDE SEQUENCE [MRNA] (ISOFORM 2)</scope>
    <source>
        <strain>C57BL/6J</strain>
    </source>
</reference>
<reference key="2">
    <citation type="journal article" date="2005" name="Science">
        <title>The transcriptional landscape of the mammalian genome.</title>
        <authorList>
            <person name="Carninci P."/>
            <person name="Kasukawa T."/>
            <person name="Katayama S."/>
            <person name="Gough J."/>
            <person name="Frith M.C."/>
            <person name="Maeda N."/>
            <person name="Oyama R."/>
            <person name="Ravasi T."/>
            <person name="Lenhard B."/>
            <person name="Wells C."/>
            <person name="Kodzius R."/>
            <person name="Shimokawa K."/>
            <person name="Bajic V.B."/>
            <person name="Brenner S.E."/>
            <person name="Batalov S."/>
            <person name="Forrest A.R."/>
            <person name="Zavolan M."/>
            <person name="Davis M.J."/>
            <person name="Wilming L.G."/>
            <person name="Aidinis V."/>
            <person name="Allen J.E."/>
            <person name="Ambesi-Impiombato A."/>
            <person name="Apweiler R."/>
            <person name="Aturaliya R.N."/>
            <person name="Bailey T.L."/>
            <person name="Bansal M."/>
            <person name="Baxter L."/>
            <person name="Beisel K.W."/>
            <person name="Bersano T."/>
            <person name="Bono H."/>
            <person name="Chalk A.M."/>
            <person name="Chiu K.P."/>
            <person name="Choudhary V."/>
            <person name="Christoffels A."/>
            <person name="Clutterbuck D.R."/>
            <person name="Crowe M.L."/>
            <person name="Dalla E."/>
            <person name="Dalrymple B.P."/>
            <person name="de Bono B."/>
            <person name="Della Gatta G."/>
            <person name="di Bernardo D."/>
            <person name="Down T."/>
            <person name="Engstrom P."/>
            <person name="Fagiolini M."/>
            <person name="Faulkner G."/>
            <person name="Fletcher C.F."/>
            <person name="Fukushima T."/>
            <person name="Furuno M."/>
            <person name="Futaki S."/>
            <person name="Gariboldi M."/>
            <person name="Georgii-Hemming P."/>
            <person name="Gingeras T.R."/>
            <person name="Gojobori T."/>
            <person name="Green R.E."/>
            <person name="Gustincich S."/>
            <person name="Harbers M."/>
            <person name="Hayashi Y."/>
            <person name="Hensch T.K."/>
            <person name="Hirokawa N."/>
            <person name="Hill D."/>
            <person name="Huminiecki L."/>
            <person name="Iacono M."/>
            <person name="Ikeo K."/>
            <person name="Iwama A."/>
            <person name="Ishikawa T."/>
            <person name="Jakt M."/>
            <person name="Kanapin A."/>
            <person name="Katoh M."/>
            <person name="Kawasawa Y."/>
            <person name="Kelso J."/>
            <person name="Kitamura H."/>
            <person name="Kitano H."/>
            <person name="Kollias G."/>
            <person name="Krishnan S.P."/>
            <person name="Kruger A."/>
            <person name="Kummerfeld S.K."/>
            <person name="Kurochkin I.V."/>
            <person name="Lareau L.F."/>
            <person name="Lazarevic D."/>
            <person name="Lipovich L."/>
            <person name="Liu J."/>
            <person name="Liuni S."/>
            <person name="McWilliam S."/>
            <person name="Madan Babu M."/>
            <person name="Madera M."/>
            <person name="Marchionni L."/>
            <person name="Matsuda H."/>
            <person name="Matsuzawa S."/>
            <person name="Miki H."/>
            <person name="Mignone F."/>
            <person name="Miyake S."/>
            <person name="Morris K."/>
            <person name="Mottagui-Tabar S."/>
            <person name="Mulder N."/>
            <person name="Nakano N."/>
            <person name="Nakauchi H."/>
            <person name="Ng P."/>
            <person name="Nilsson R."/>
            <person name="Nishiguchi S."/>
            <person name="Nishikawa S."/>
            <person name="Nori F."/>
            <person name="Ohara O."/>
            <person name="Okazaki Y."/>
            <person name="Orlando V."/>
            <person name="Pang K.C."/>
            <person name="Pavan W.J."/>
            <person name="Pavesi G."/>
            <person name="Pesole G."/>
            <person name="Petrovsky N."/>
            <person name="Piazza S."/>
            <person name="Reed J."/>
            <person name="Reid J.F."/>
            <person name="Ring B.Z."/>
            <person name="Ringwald M."/>
            <person name="Rost B."/>
            <person name="Ruan Y."/>
            <person name="Salzberg S.L."/>
            <person name="Sandelin A."/>
            <person name="Schneider C."/>
            <person name="Schoenbach C."/>
            <person name="Sekiguchi K."/>
            <person name="Semple C.A."/>
            <person name="Seno S."/>
            <person name="Sessa L."/>
            <person name="Sheng Y."/>
            <person name="Shibata Y."/>
            <person name="Shimada H."/>
            <person name="Shimada K."/>
            <person name="Silva D."/>
            <person name="Sinclair B."/>
            <person name="Sperling S."/>
            <person name="Stupka E."/>
            <person name="Sugiura K."/>
            <person name="Sultana R."/>
            <person name="Takenaka Y."/>
            <person name="Taki K."/>
            <person name="Tammoja K."/>
            <person name="Tan S.L."/>
            <person name="Tang S."/>
            <person name="Taylor M.S."/>
            <person name="Tegner J."/>
            <person name="Teichmann S.A."/>
            <person name="Ueda H.R."/>
            <person name="van Nimwegen E."/>
            <person name="Verardo R."/>
            <person name="Wei C.L."/>
            <person name="Yagi K."/>
            <person name="Yamanishi H."/>
            <person name="Zabarovsky E."/>
            <person name="Zhu S."/>
            <person name="Zimmer A."/>
            <person name="Hide W."/>
            <person name="Bult C."/>
            <person name="Grimmond S.M."/>
            <person name="Teasdale R.D."/>
            <person name="Liu E.T."/>
            <person name="Brusic V."/>
            <person name="Quackenbush J."/>
            <person name="Wahlestedt C."/>
            <person name="Mattick J.S."/>
            <person name="Hume D.A."/>
            <person name="Kai C."/>
            <person name="Sasaki D."/>
            <person name="Tomaru Y."/>
            <person name="Fukuda S."/>
            <person name="Kanamori-Katayama M."/>
            <person name="Suzuki M."/>
            <person name="Aoki J."/>
            <person name="Arakawa T."/>
            <person name="Iida J."/>
            <person name="Imamura K."/>
            <person name="Itoh M."/>
            <person name="Kato T."/>
            <person name="Kawaji H."/>
            <person name="Kawagashira N."/>
            <person name="Kawashima T."/>
            <person name="Kojima M."/>
            <person name="Kondo S."/>
            <person name="Konno H."/>
            <person name="Nakano K."/>
            <person name="Ninomiya N."/>
            <person name="Nishio T."/>
            <person name="Okada M."/>
            <person name="Plessy C."/>
            <person name="Shibata K."/>
            <person name="Shiraki T."/>
            <person name="Suzuki S."/>
            <person name="Tagami M."/>
            <person name="Waki K."/>
            <person name="Watahiki A."/>
            <person name="Okamura-Oho Y."/>
            <person name="Suzuki H."/>
            <person name="Kawai J."/>
            <person name="Hayashizaki Y."/>
        </authorList>
    </citation>
    <scope>NUCLEOTIDE SEQUENCE [LARGE SCALE MRNA] (ISOFORMS 3 AND 4)</scope>
    <source>
        <strain>C57BL/6J</strain>
        <tissue>Embryo</tissue>
    </source>
</reference>
<reference key="3">
    <citation type="journal article" date="2009" name="PLoS Biol.">
        <title>Lineage-specific biology revealed by a finished genome assembly of the mouse.</title>
        <authorList>
            <person name="Church D.M."/>
            <person name="Goodstadt L."/>
            <person name="Hillier L.W."/>
            <person name="Zody M.C."/>
            <person name="Goldstein S."/>
            <person name="She X."/>
            <person name="Bult C.J."/>
            <person name="Agarwala R."/>
            <person name="Cherry J.L."/>
            <person name="DiCuccio M."/>
            <person name="Hlavina W."/>
            <person name="Kapustin Y."/>
            <person name="Meric P."/>
            <person name="Maglott D."/>
            <person name="Birtle Z."/>
            <person name="Marques A.C."/>
            <person name="Graves T."/>
            <person name="Zhou S."/>
            <person name="Teague B."/>
            <person name="Potamousis K."/>
            <person name="Churas C."/>
            <person name="Place M."/>
            <person name="Herschleb J."/>
            <person name="Runnheim R."/>
            <person name="Forrest D."/>
            <person name="Amos-Landgraf J."/>
            <person name="Schwartz D.C."/>
            <person name="Cheng Z."/>
            <person name="Lindblad-Toh K."/>
            <person name="Eichler E.E."/>
            <person name="Ponting C.P."/>
        </authorList>
    </citation>
    <scope>NUCLEOTIDE SEQUENCE [LARGE SCALE GENOMIC DNA]</scope>
    <source>
        <strain>C57BL/6J</strain>
    </source>
</reference>
<reference key="4">
    <citation type="journal article" date="2004" name="Genome Res.">
        <title>The status, quality, and expansion of the NIH full-length cDNA project: the Mammalian Gene Collection (MGC).</title>
        <authorList>
            <consortium name="The MGC Project Team"/>
        </authorList>
    </citation>
    <scope>NUCLEOTIDE SEQUENCE [LARGE SCALE MRNA] (ISOFORM 2)</scope>
    <source>
        <strain>C57BL/6J</strain>
        <tissue>Eye</tissue>
    </source>
</reference>
<reference key="5">
    <citation type="journal article" date="2009" name="Proc. Natl. Acad. Sci. U.S.A.">
        <title>Lin-28B transactivation is necessary for Myc-mediated let-7 repression and proliferation.</title>
        <authorList>
            <person name="Chang T.-C."/>
            <person name="Zeitels L.R."/>
            <person name="Hwang H.-W."/>
            <person name="Chivukula R.R."/>
            <person name="Wentzel E.A."/>
            <person name="Dews M."/>
            <person name="Jung J."/>
            <person name="Gao P."/>
            <person name="Dang C.V."/>
            <person name="Beer M.A."/>
            <person name="Thomas-Tikhonenko A."/>
            <person name="Mendell J.T."/>
        </authorList>
    </citation>
    <scope>FUNCTION IN MYC-MEDIATED LET-7 REPRESSION</scope>
</reference>
<name>LN28B_MOUSE</name>
<comment type="function">
    <text evidence="2 5">Suppressor of microRNA (miRNA) biogenesis, including that of let-7 and possibly of miR107, miR-143 and miR-200c. Binds primary let-7 transcripts (pri-let-7), including pri-let-7g and pri-let-7a-1, and sequester them in the nucleolus, away from the microprocessor complex, hence preventing their processing into mature miRNA. Does not act on pri-miR21. The repression of let-7 expression is required for normal development and contributes to maintain the pluripotent state of embryonic stem cells by preventing let-7-mediated differentiation. When overexpressed, recruits ZCCHC11/TUT4 uridylyltransferase to pre-let-7 transcripts, leading to their terminal uridylation and degradation. This activity might not be relevant in vivo, as LIN28B-mediated inhibition of let-7 miRNA maturation appears to be ZCCHC11-independent. Interaction with target pre-miRNAs occurs via an 5'-GGAG-3' motif in the pre-miRNA terminal loop (By similarity). Mediates MYC-induced let-7 repression (PubMed:19211792). When overexpressed, may stimulate growth of carcinoma cell lines (By similarity).</text>
</comment>
<comment type="subcellular location">
    <subcellularLocation>
        <location evidence="2">Nucleus</location>
        <location evidence="2">Nucleolus</location>
    </subcellularLocation>
</comment>
<comment type="alternative products">
    <event type="alternative splicing"/>
    <isoform>
        <id>Q45KJ6-1</id>
        <name>1</name>
        <sequence type="displayed"/>
    </isoform>
    <isoform>
        <id>Q45KJ6-2</id>
        <name>2</name>
        <sequence type="described" ref="VSP_021119"/>
    </isoform>
    <isoform>
        <id>Q45KJ6-3</id>
        <name>3</name>
        <sequence type="described" ref="VSP_021115 VSP_021119 VSP_021120 VSP_021121"/>
    </isoform>
    <isoform>
        <id>Q45KJ6-4</id>
        <name>4</name>
        <sequence type="described" ref="VSP_021116 VSP_021117 VSP_021118"/>
    </isoform>
</comment>
<comment type="domain">
    <text evidence="1">The tandem zinc fingers, also referred as zinc knuckle domain (ZKD), mediate specific binding to the GGAG/GGUG motif while the CSD shows only limited pyrimidine-rich sequence specificity. Both domains bind single-stranded nucleic acids (By similarity).</text>
</comment>
<comment type="similarity">
    <text evidence="9">Belongs to the lin-28 family.</text>
</comment>
<keyword id="KW-0025">Alternative splicing</keyword>
<keyword id="KW-0479">Metal-binding</keyword>
<keyword id="KW-0539">Nucleus</keyword>
<keyword id="KW-0597">Phosphoprotein</keyword>
<keyword id="KW-1185">Reference proteome</keyword>
<keyword id="KW-0677">Repeat</keyword>
<keyword id="KW-0694">RNA-binding</keyword>
<keyword id="KW-0943">RNA-mediated gene silencing</keyword>
<keyword id="KW-0862">Zinc</keyword>
<keyword id="KW-0863">Zinc-finger</keyword>
<organism>
    <name type="scientific">Mus musculus</name>
    <name type="common">Mouse</name>
    <dbReference type="NCBI Taxonomy" id="10090"/>
    <lineage>
        <taxon>Eukaryota</taxon>
        <taxon>Metazoa</taxon>
        <taxon>Chordata</taxon>
        <taxon>Craniata</taxon>
        <taxon>Vertebrata</taxon>
        <taxon>Euteleostomi</taxon>
        <taxon>Mammalia</taxon>
        <taxon>Eutheria</taxon>
        <taxon>Euarchontoglires</taxon>
        <taxon>Glires</taxon>
        <taxon>Rodentia</taxon>
        <taxon>Myomorpha</taxon>
        <taxon>Muroidea</taxon>
        <taxon>Muridae</taxon>
        <taxon>Murinae</taxon>
        <taxon>Mus</taxon>
        <taxon>Mus</taxon>
    </lineage>
</organism>